<keyword id="KW-0066">ATP synthesis</keyword>
<keyword id="KW-0997">Cell inner membrane</keyword>
<keyword id="KW-1003">Cell membrane</keyword>
<keyword id="KW-0138">CF(0)</keyword>
<keyword id="KW-0375">Hydrogen ion transport</keyword>
<keyword id="KW-0406">Ion transport</keyword>
<keyword id="KW-0472">Membrane</keyword>
<keyword id="KW-0812">Transmembrane</keyword>
<keyword id="KW-1133">Transmembrane helix</keyword>
<keyword id="KW-0813">Transport</keyword>
<organism>
    <name type="scientific">Rhodopseudomonas palustris (strain BisB18)</name>
    <dbReference type="NCBI Taxonomy" id="316056"/>
    <lineage>
        <taxon>Bacteria</taxon>
        <taxon>Pseudomonadati</taxon>
        <taxon>Pseudomonadota</taxon>
        <taxon>Alphaproteobacteria</taxon>
        <taxon>Hyphomicrobiales</taxon>
        <taxon>Nitrobacteraceae</taxon>
        <taxon>Rhodopseudomonas</taxon>
    </lineage>
</organism>
<name>ATP6_RHOPB</name>
<protein>
    <recommendedName>
        <fullName evidence="1">ATP synthase subunit a</fullName>
    </recommendedName>
    <alternativeName>
        <fullName evidence="1">ATP synthase F0 sector subunit a</fullName>
    </alternativeName>
    <alternativeName>
        <fullName evidence="1">F-ATPase subunit 6</fullName>
    </alternativeName>
</protein>
<comment type="function">
    <text evidence="1">Key component of the proton channel; it plays a direct role in the translocation of protons across the membrane.</text>
</comment>
<comment type="subunit">
    <text evidence="1">F-type ATPases have 2 components, CF(1) - the catalytic core - and CF(0) - the membrane proton channel. CF(1) has five subunits: alpha(3), beta(3), gamma(1), delta(1), epsilon(1). CF(0) has four main subunits: a, b, b' and c.</text>
</comment>
<comment type="subcellular location">
    <subcellularLocation>
        <location evidence="1">Cell inner membrane</location>
        <topology evidence="1">Multi-pass membrane protein</topology>
    </subcellularLocation>
</comment>
<comment type="similarity">
    <text evidence="1">Belongs to the ATPase A chain family.</text>
</comment>
<proteinExistence type="inferred from homology"/>
<accession>Q20WZ8</accession>
<evidence type="ECO:0000255" key="1">
    <source>
        <dbReference type="HAMAP-Rule" id="MF_01393"/>
    </source>
</evidence>
<dbReference type="EMBL" id="CP000301">
    <property type="protein sequence ID" value="ABD90338.1"/>
    <property type="molecule type" value="Genomic_DNA"/>
</dbReference>
<dbReference type="SMR" id="Q20WZ8"/>
<dbReference type="STRING" id="316056.RPC_4816"/>
<dbReference type="KEGG" id="rpc:RPC_4816"/>
<dbReference type="eggNOG" id="COG0356">
    <property type="taxonomic scope" value="Bacteria"/>
</dbReference>
<dbReference type="HOGENOM" id="CLU_041018_0_2_5"/>
<dbReference type="OrthoDB" id="9809130at2"/>
<dbReference type="GO" id="GO:0005886">
    <property type="term" value="C:plasma membrane"/>
    <property type="evidence" value="ECO:0007669"/>
    <property type="project" value="UniProtKB-SubCell"/>
</dbReference>
<dbReference type="GO" id="GO:0045259">
    <property type="term" value="C:proton-transporting ATP synthase complex"/>
    <property type="evidence" value="ECO:0007669"/>
    <property type="project" value="UniProtKB-KW"/>
</dbReference>
<dbReference type="GO" id="GO:0046933">
    <property type="term" value="F:proton-transporting ATP synthase activity, rotational mechanism"/>
    <property type="evidence" value="ECO:0007669"/>
    <property type="project" value="UniProtKB-UniRule"/>
</dbReference>
<dbReference type="CDD" id="cd00310">
    <property type="entry name" value="ATP-synt_Fo_a_6"/>
    <property type="match status" value="1"/>
</dbReference>
<dbReference type="FunFam" id="1.20.120.220:FF:000003">
    <property type="entry name" value="ATP synthase subunit a"/>
    <property type="match status" value="1"/>
</dbReference>
<dbReference type="Gene3D" id="1.20.120.220">
    <property type="entry name" value="ATP synthase, F0 complex, subunit A"/>
    <property type="match status" value="1"/>
</dbReference>
<dbReference type="HAMAP" id="MF_01393">
    <property type="entry name" value="ATP_synth_a_bact"/>
    <property type="match status" value="1"/>
</dbReference>
<dbReference type="InterPro" id="IPR000568">
    <property type="entry name" value="ATP_synth_F0_asu"/>
</dbReference>
<dbReference type="InterPro" id="IPR023011">
    <property type="entry name" value="ATP_synth_F0_asu_AS"/>
</dbReference>
<dbReference type="InterPro" id="IPR045083">
    <property type="entry name" value="ATP_synth_F0_asu_bact/mt"/>
</dbReference>
<dbReference type="InterPro" id="IPR035908">
    <property type="entry name" value="F0_ATP_A_sf"/>
</dbReference>
<dbReference type="NCBIfam" id="TIGR01131">
    <property type="entry name" value="ATP_synt_6_or_A"/>
    <property type="match status" value="1"/>
</dbReference>
<dbReference type="NCBIfam" id="NF004482">
    <property type="entry name" value="PRK05815.2-4"/>
    <property type="match status" value="1"/>
</dbReference>
<dbReference type="PANTHER" id="PTHR11410">
    <property type="entry name" value="ATP SYNTHASE SUBUNIT A"/>
    <property type="match status" value="1"/>
</dbReference>
<dbReference type="PANTHER" id="PTHR11410:SF0">
    <property type="entry name" value="ATP SYNTHASE SUBUNIT A"/>
    <property type="match status" value="1"/>
</dbReference>
<dbReference type="Pfam" id="PF00119">
    <property type="entry name" value="ATP-synt_A"/>
    <property type="match status" value="1"/>
</dbReference>
<dbReference type="PRINTS" id="PR00123">
    <property type="entry name" value="ATPASEA"/>
</dbReference>
<dbReference type="SUPFAM" id="SSF81336">
    <property type="entry name" value="F1F0 ATP synthase subunit A"/>
    <property type="match status" value="1"/>
</dbReference>
<dbReference type="PROSITE" id="PS00449">
    <property type="entry name" value="ATPASE_A"/>
    <property type="match status" value="1"/>
</dbReference>
<reference key="1">
    <citation type="submission" date="2006-03" db="EMBL/GenBank/DDBJ databases">
        <title>Complete sequence of Rhodopseudomonas palustris BisB18.</title>
        <authorList>
            <consortium name="US DOE Joint Genome Institute"/>
            <person name="Copeland A."/>
            <person name="Lucas S."/>
            <person name="Lapidus A."/>
            <person name="Barry K."/>
            <person name="Detter J.C."/>
            <person name="Glavina del Rio T."/>
            <person name="Hammon N."/>
            <person name="Israni S."/>
            <person name="Dalin E."/>
            <person name="Tice H."/>
            <person name="Pitluck S."/>
            <person name="Chain P."/>
            <person name="Malfatti S."/>
            <person name="Shin M."/>
            <person name="Vergez L."/>
            <person name="Schmutz J."/>
            <person name="Larimer F."/>
            <person name="Land M."/>
            <person name="Hauser L."/>
            <person name="Pelletier D.A."/>
            <person name="Kyrpides N."/>
            <person name="Anderson I."/>
            <person name="Oda Y."/>
            <person name="Harwood C.S."/>
            <person name="Richardson P."/>
        </authorList>
    </citation>
    <scope>NUCLEOTIDE SEQUENCE [LARGE SCALE GENOMIC DNA]</scope>
    <source>
        <strain>BisB18</strain>
    </source>
</reference>
<feature type="chain" id="PRO_0000362419" description="ATP synthase subunit a">
    <location>
        <begin position="1"/>
        <end position="249"/>
    </location>
</feature>
<feature type="transmembrane region" description="Helical" evidence="1">
    <location>
        <begin position="30"/>
        <end position="50"/>
    </location>
</feature>
<feature type="transmembrane region" description="Helical" evidence="1">
    <location>
        <begin position="84"/>
        <end position="104"/>
    </location>
</feature>
<feature type="transmembrane region" description="Helical" evidence="1">
    <location>
        <begin position="114"/>
        <end position="134"/>
    </location>
</feature>
<feature type="transmembrane region" description="Helical" evidence="1">
    <location>
        <begin position="143"/>
        <end position="163"/>
    </location>
</feature>
<feature type="transmembrane region" description="Helical" evidence="1">
    <location>
        <begin position="196"/>
        <end position="216"/>
    </location>
</feature>
<feature type="transmembrane region" description="Helical" evidence="1">
    <location>
        <begin position="221"/>
        <end position="241"/>
    </location>
</feature>
<sequence>MIDPIHQFNIEKIFTIGHIGGQEIAFTNSSAYMLVAVAVISLLMIGGVAGRQMVPGRIQSLAEISYEFVAGTIRSTAGVEGLKFFPLVFSLFMFIMISNMVGIIPYTFTITSHLIVTAALALLVFLTVLIYGFYRNGLGFFKIFVPSGVPVFILPLVVFIEVFSFFLRPISHSVRLFANMLAGHIALKVFASFIPLLAGLGIAGYFGAVLPLGMVIALTALELLVAFLQAYVFAILTCIYLNDALHAGH</sequence>
<gene>
    <name evidence="1" type="primary">atpB</name>
    <name type="ordered locus">RPC_4816</name>
</gene>